<accession>A6X3M9</accession>
<organism>
    <name type="scientific">Brucella anthropi (strain ATCC 49188 / DSM 6882 / CCUG 24695 / JCM 21032 / LMG 3331 / NBRC 15819 / NCTC 12168 / Alc 37)</name>
    <name type="common">Ochrobactrum anthropi</name>
    <dbReference type="NCBI Taxonomy" id="439375"/>
    <lineage>
        <taxon>Bacteria</taxon>
        <taxon>Pseudomonadati</taxon>
        <taxon>Pseudomonadota</taxon>
        <taxon>Alphaproteobacteria</taxon>
        <taxon>Hyphomicrobiales</taxon>
        <taxon>Brucellaceae</taxon>
        <taxon>Brucella/Ochrobactrum group</taxon>
        <taxon>Brucella</taxon>
    </lineage>
</organism>
<dbReference type="EC" id="4.2.1.126" evidence="1"/>
<dbReference type="EMBL" id="CP000759">
    <property type="protein sequence ID" value="ABS15833.1"/>
    <property type="molecule type" value="Genomic_DNA"/>
</dbReference>
<dbReference type="RefSeq" id="WP_012092568.1">
    <property type="nucleotide sequence ID" value="NC_009668.1"/>
</dbReference>
<dbReference type="SMR" id="A6X3M9"/>
<dbReference type="STRING" id="439375.Oant_3125"/>
<dbReference type="KEGG" id="oan:Oant_3125"/>
<dbReference type="PATRIC" id="fig|439375.7.peg.3275"/>
<dbReference type="eggNOG" id="COG2103">
    <property type="taxonomic scope" value="Bacteria"/>
</dbReference>
<dbReference type="HOGENOM" id="CLU_049049_1_1_5"/>
<dbReference type="UniPathway" id="UPA00342"/>
<dbReference type="UniPathway" id="UPA00343"/>
<dbReference type="UniPathway" id="UPA00544"/>
<dbReference type="Proteomes" id="UP000002301">
    <property type="component" value="Chromosome 2"/>
</dbReference>
<dbReference type="GO" id="GO:0097367">
    <property type="term" value="F:carbohydrate derivative binding"/>
    <property type="evidence" value="ECO:0007669"/>
    <property type="project" value="InterPro"/>
</dbReference>
<dbReference type="GO" id="GO:0016835">
    <property type="term" value="F:carbon-oxygen lyase activity"/>
    <property type="evidence" value="ECO:0007669"/>
    <property type="project" value="UniProtKB-UniRule"/>
</dbReference>
<dbReference type="GO" id="GO:0016803">
    <property type="term" value="F:ether hydrolase activity"/>
    <property type="evidence" value="ECO:0007669"/>
    <property type="project" value="TreeGrafter"/>
</dbReference>
<dbReference type="GO" id="GO:0097175">
    <property type="term" value="P:1,6-anhydro-N-acetyl-beta-muramic acid catabolic process"/>
    <property type="evidence" value="ECO:0007669"/>
    <property type="project" value="UniProtKB-UniRule"/>
</dbReference>
<dbReference type="GO" id="GO:0046348">
    <property type="term" value="P:amino sugar catabolic process"/>
    <property type="evidence" value="ECO:0007669"/>
    <property type="project" value="InterPro"/>
</dbReference>
<dbReference type="GO" id="GO:0097173">
    <property type="term" value="P:N-acetylmuramic acid catabolic process"/>
    <property type="evidence" value="ECO:0007669"/>
    <property type="project" value="UniProtKB-UniPathway"/>
</dbReference>
<dbReference type="GO" id="GO:0009254">
    <property type="term" value="P:peptidoglycan turnover"/>
    <property type="evidence" value="ECO:0007669"/>
    <property type="project" value="UniProtKB-UniRule"/>
</dbReference>
<dbReference type="CDD" id="cd05007">
    <property type="entry name" value="SIS_Etherase"/>
    <property type="match status" value="1"/>
</dbReference>
<dbReference type="FunFam" id="1.10.8.1080:FF:000001">
    <property type="entry name" value="N-acetylmuramic acid 6-phosphate etherase"/>
    <property type="match status" value="1"/>
</dbReference>
<dbReference type="FunFam" id="3.40.50.10490:FF:000014">
    <property type="entry name" value="N-acetylmuramic acid 6-phosphate etherase"/>
    <property type="match status" value="1"/>
</dbReference>
<dbReference type="Gene3D" id="1.10.8.1080">
    <property type="match status" value="1"/>
</dbReference>
<dbReference type="Gene3D" id="3.40.50.10490">
    <property type="entry name" value="Glucose-6-phosphate isomerase like protein, domain 1"/>
    <property type="match status" value="1"/>
</dbReference>
<dbReference type="HAMAP" id="MF_00068">
    <property type="entry name" value="MurQ"/>
    <property type="match status" value="1"/>
</dbReference>
<dbReference type="InterPro" id="IPR005488">
    <property type="entry name" value="Etherase_MurQ"/>
</dbReference>
<dbReference type="InterPro" id="IPR005486">
    <property type="entry name" value="Glucokinase_regulatory_CS"/>
</dbReference>
<dbReference type="InterPro" id="IPR040190">
    <property type="entry name" value="MURQ/GCKR"/>
</dbReference>
<dbReference type="InterPro" id="IPR001347">
    <property type="entry name" value="SIS_dom"/>
</dbReference>
<dbReference type="InterPro" id="IPR046348">
    <property type="entry name" value="SIS_dom_sf"/>
</dbReference>
<dbReference type="NCBIfam" id="TIGR00274">
    <property type="entry name" value="N-acetylmuramic acid 6-phosphate etherase"/>
    <property type="match status" value="1"/>
</dbReference>
<dbReference type="NCBIfam" id="NF003915">
    <property type="entry name" value="PRK05441.1"/>
    <property type="match status" value="1"/>
</dbReference>
<dbReference type="NCBIfam" id="NF009222">
    <property type="entry name" value="PRK12570.1"/>
    <property type="match status" value="1"/>
</dbReference>
<dbReference type="PANTHER" id="PTHR10088">
    <property type="entry name" value="GLUCOKINASE REGULATORY PROTEIN"/>
    <property type="match status" value="1"/>
</dbReference>
<dbReference type="PANTHER" id="PTHR10088:SF5">
    <property type="entry name" value="N-ACETYLMURAMIC ACID 6-PHOSPHATE ETHERASE"/>
    <property type="match status" value="1"/>
</dbReference>
<dbReference type="Pfam" id="PF22645">
    <property type="entry name" value="GKRP_SIS_N"/>
    <property type="match status" value="1"/>
</dbReference>
<dbReference type="SUPFAM" id="SSF53697">
    <property type="entry name" value="SIS domain"/>
    <property type="match status" value="1"/>
</dbReference>
<dbReference type="PROSITE" id="PS01272">
    <property type="entry name" value="GCKR"/>
    <property type="match status" value="1"/>
</dbReference>
<dbReference type="PROSITE" id="PS51464">
    <property type="entry name" value="SIS"/>
    <property type="match status" value="1"/>
</dbReference>
<name>MURQ_BRUA4</name>
<reference key="1">
    <citation type="journal article" date="2011" name="J. Bacteriol.">
        <title>Genome of Ochrobactrum anthropi ATCC 49188 T, a versatile opportunistic pathogen and symbiont of several eukaryotic hosts.</title>
        <authorList>
            <person name="Chain P.S."/>
            <person name="Lang D.M."/>
            <person name="Comerci D.J."/>
            <person name="Malfatti S.A."/>
            <person name="Vergez L.M."/>
            <person name="Shin M."/>
            <person name="Ugalde R.A."/>
            <person name="Garcia E."/>
            <person name="Tolmasky M.E."/>
        </authorList>
    </citation>
    <scope>NUCLEOTIDE SEQUENCE [LARGE SCALE GENOMIC DNA]</scope>
    <source>
        <strain>ATCC 49188 / DSM 6882 / CCUG 24695 / JCM 21032 / LMG 3331 / NBRC 15819 / NCTC 12168 / Alc 37</strain>
    </source>
</reference>
<gene>
    <name evidence="1" type="primary">murQ</name>
    <name type="ordered locus">Oant_3125</name>
</gene>
<evidence type="ECO:0000255" key="1">
    <source>
        <dbReference type="HAMAP-Rule" id="MF_00068"/>
    </source>
</evidence>
<sequence>MTEQALLSELDRLVSEERNPRTMDIDLLSSLAIVRRINDEDHLVPAAVEQVLPQVAQAVDKVVDAFRVGGRLIYLGAGTSGRLGVLDASECPPTFSVPEGMVIGLIAGGVDALQHAIEGAEDDPSLGESDLRNIGLTSHDVVVGIAVSGRTPYVIGGLAYAESIGATTVALSCNPDSTIATMAEIAISPVVGPEILTGSTRLKSGTAQKLVLNMLTTASMIRIGKTYENLMVDVSATNNKLVARASRIVMQATGCGAGEAKRVLALTDNEVKLAILITITGMPVDEARKALKNAGGFLRQAINANKA</sequence>
<feature type="chain" id="PRO_1000009126" description="N-acetylmuramic acid 6-phosphate etherase">
    <location>
        <begin position="1"/>
        <end position="307"/>
    </location>
</feature>
<feature type="domain" description="SIS" evidence="1">
    <location>
        <begin position="62"/>
        <end position="225"/>
    </location>
</feature>
<feature type="active site" description="Proton donor" evidence="1">
    <location>
        <position position="90"/>
    </location>
</feature>
<feature type="active site" evidence="1">
    <location>
        <position position="121"/>
    </location>
</feature>
<protein>
    <recommendedName>
        <fullName evidence="1">N-acetylmuramic acid 6-phosphate etherase</fullName>
        <shortName evidence="1">MurNAc-6-P etherase</shortName>
        <ecNumber evidence="1">4.2.1.126</ecNumber>
    </recommendedName>
    <alternativeName>
        <fullName evidence="1">N-acetylmuramic acid 6-phosphate hydrolase</fullName>
    </alternativeName>
    <alternativeName>
        <fullName evidence="1">N-acetylmuramic acid 6-phosphate lyase</fullName>
    </alternativeName>
</protein>
<comment type="function">
    <text evidence="1">Specifically catalyzes the cleavage of the D-lactyl ether substituent of MurNAc 6-phosphate, producing GlcNAc 6-phosphate and D-lactate. Together with AnmK, is also required for the utilization of anhydro-N-acetylmuramic acid (anhMurNAc) either imported from the medium or derived from its own cell wall murein, and thus plays a role in cell wall recycling.</text>
</comment>
<comment type="catalytic activity">
    <reaction evidence="1">
        <text>N-acetyl-D-muramate 6-phosphate + H2O = N-acetyl-D-glucosamine 6-phosphate + (R)-lactate</text>
        <dbReference type="Rhea" id="RHEA:26410"/>
        <dbReference type="ChEBI" id="CHEBI:15377"/>
        <dbReference type="ChEBI" id="CHEBI:16004"/>
        <dbReference type="ChEBI" id="CHEBI:57513"/>
        <dbReference type="ChEBI" id="CHEBI:58722"/>
        <dbReference type="EC" id="4.2.1.126"/>
    </reaction>
</comment>
<comment type="pathway">
    <text evidence="1">Amino-sugar metabolism; 1,6-anhydro-N-acetylmuramate degradation.</text>
</comment>
<comment type="pathway">
    <text evidence="1">Amino-sugar metabolism; N-acetylmuramate degradation.</text>
</comment>
<comment type="pathway">
    <text evidence="1">Cell wall biogenesis; peptidoglycan recycling.</text>
</comment>
<comment type="subunit">
    <text evidence="1">Homodimer.</text>
</comment>
<comment type="miscellaneous">
    <text evidence="1">A lyase-type mechanism (elimination/hydration) is suggested for the cleavage of the lactyl ether bond of MurNAc 6-phosphate, with the formation of an alpha,beta-unsaturated aldehyde intermediate with (E)-stereochemistry, followed by the syn addition of water to give product.</text>
</comment>
<comment type="similarity">
    <text evidence="1">Belongs to the GCKR-like family. MurNAc-6-P etherase subfamily.</text>
</comment>
<keyword id="KW-0119">Carbohydrate metabolism</keyword>
<keyword id="KW-0456">Lyase</keyword>
<keyword id="KW-1185">Reference proteome</keyword>
<proteinExistence type="inferred from homology"/>